<reference key="1">
    <citation type="journal article" date="2008" name="Science">
        <title>Genome of an endosymbiont coupling N2 fixation to cellulolysis within RT protist cells in termite gut.</title>
        <authorList>
            <person name="Hongoh Y."/>
            <person name="Sharma V.K."/>
            <person name="Prakash T."/>
            <person name="Noda S."/>
            <person name="Toh H."/>
            <person name="Taylor T.D."/>
            <person name="Kudo T."/>
            <person name="Sakaki Y."/>
            <person name="Toyoda A."/>
            <person name="Hattori M."/>
            <person name="Ohkuma M."/>
        </authorList>
    </citation>
    <scope>NUCLEOTIDE SEQUENCE [LARGE SCALE GENOMIC DNA]</scope>
</reference>
<feature type="chain" id="PRO_1000142921" description="Large ribosomal subunit protein uL16">
    <location>
        <begin position="1"/>
        <end position="143"/>
    </location>
</feature>
<feature type="region of interest" description="Disordered" evidence="2">
    <location>
        <begin position="1"/>
        <end position="25"/>
    </location>
</feature>
<feature type="compositionally biased region" description="Basic residues" evidence="2">
    <location>
        <begin position="1"/>
        <end position="17"/>
    </location>
</feature>
<dbReference type="EMBL" id="AP010656">
    <property type="protein sequence ID" value="BAG83350.1"/>
    <property type="molecule type" value="Genomic_DNA"/>
</dbReference>
<dbReference type="RefSeq" id="WP_012573111.1">
    <property type="nucleotide sequence ID" value="NC_011565.1"/>
</dbReference>
<dbReference type="SMR" id="B6YQ78"/>
<dbReference type="STRING" id="511995.CFPG_087"/>
<dbReference type="KEGG" id="aps:CFPG_087"/>
<dbReference type="eggNOG" id="COG0197">
    <property type="taxonomic scope" value="Bacteria"/>
</dbReference>
<dbReference type="HOGENOM" id="CLU_078858_2_1_10"/>
<dbReference type="OrthoDB" id="9802589at2"/>
<dbReference type="Proteomes" id="UP000000723">
    <property type="component" value="Chromosome"/>
</dbReference>
<dbReference type="GO" id="GO:0022625">
    <property type="term" value="C:cytosolic large ribosomal subunit"/>
    <property type="evidence" value="ECO:0007669"/>
    <property type="project" value="TreeGrafter"/>
</dbReference>
<dbReference type="GO" id="GO:0019843">
    <property type="term" value="F:rRNA binding"/>
    <property type="evidence" value="ECO:0007669"/>
    <property type="project" value="UniProtKB-UniRule"/>
</dbReference>
<dbReference type="GO" id="GO:0003735">
    <property type="term" value="F:structural constituent of ribosome"/>
    <property type="evidence" value="ECO:0007669"/>
    <property type="project" value="InterPro"/>
</dbReference>
<dbReference type="GO" id="GO:0000049">
    <property type="term" value="F:tRNA binding"/>
    <property type="evidence" value="ECO:0007669"/>
    <property type="project" value="UniProtKB-KW"/>
</dbReference>
<dbReference type="GO" id="GO:0006412">
    <property type="term" value="P:translation"/>
    <property type="evidence" value="ECO:0007669"/>
    <property type="project" value="UniProtKB-UniRule"/>
</dbReference>
<dbReference type="CDD" id="cd01433">
    <property type="entry name" value="Ribosomal_L16_L10e"/>
    <property type="match status" value="1"/>
</dbReference>
<dbReference type="FunFam" id="3.90.1170.10:FF:000001">
    <property type="entry name" value="50S ribosomal protein L16"/>
    <property type="match status" value="1"/>
</dbReference>
<dbReference type="Gene3D" id="3.90.1170.10">
    <property type="entry name" value="Ribosomal protein L10e/L16"/>
    <property type="match status" value="1"/>
</dbReference>
<dbReference type="HAMAP" id="MF_01342">
    <property type="entry name" value="Ribosomal_uL16"/>
    <property type="match status" value="1"/>
</dbReference>
<dbReference type="InterPro" id="IPR047873">
    <property type="entry name" value="Ribosomal_uL16"/>
</dbReference>
<dbReference type="InterPro" id="IPR000114">
    <property type="entry name" value="Ribosomal_uL16_bact-type"/>
</dbReference>
<dbReference type="InterPro" id="IPR020798">
    <property type="entry name" value="Ribosomal_uL16_CS"/>
</dbReference>
<dbReference type="InterPro" id="IPR016180">
    <property type="entry name" value="Ribosomal_uL16_dom"/>
</dbReference>
<dbReference type="InterPro" id="IPR036920">
    <property type="entry name" value="Ribosomal_uL16_sf"/>
</dbReference>
<dbReference type="NCBIfam" id="TIGR01164">
    <property type="entry name" value="rplP_bact"/>
    <property type="match status" value="1"/>
</dbReference>
<dbReference type="PANTHER" id="PTHR12220">
    <property type="entry name" value="50S/60S RIBOSOMAL PROTEIN L16"/>
    <property type="match status" value="1"/>
</dbReference>
<dbReference type="PANTHER" id="PTHR12220:SF13">
    <property type="entry name" value="LARGE RIBOSOMAL SUBUNIT PROTEIN UL16M"/>
    <property type="match status" value="1"/>
</dbReference>
<dbReference type="Pfam" id="PF00252">
    <property type="entry name" value="Ribosomal_L16"/>
    <property type="match status" value="1"/>
</dbReference>
<dbReference type="PRINTS" id="PR00060">
    <property type="entry name" value="RIBOSOMALL16"/>
</dbReference>
<dbReference type="SUPFAM" id="SSF54686">
    <property type="entry name" value="Ribosomal protein L16p/L10e"/>
    <property type="match status" value="1"/>
</dbReference>
<dbReference type="PROSITE" id="PS00701">
    <property type="entry name" value="RIBOSOMAL_L16_2"/>
    <property type="match status" value="1"/>
</dbReference>
<organism>
    <name type="scientific">Azobacteroides pseudotrichonymphae genomovar. CFP2</name>
    <dbReference type="NCBI Taxonomy" id="511995"/>
    <lineage>
        <taxon>Bacteria</taxon>
        <taxon>Pseudomonadati</taxon>
        <taxon>Bacteroidota</taxon>
        <taxon>Bacteroidia</taxon>
        <taxon>Bacteroidales</taxon>
        <taxon>Candidatus Azobacteroides</taxon>
    </lineage>
</organism>
<proteinExistence type="inferred from homology"/>
<sequence length="143" mass="16182">MLQPKKTKFRRSQKGRMKGNAQRGNRLSFGSFGIKTLQAKWITGQQIEAARIAVTRCMQRQGQVWVRIFPDKPITKKPAEVRMGKGKGSPEGFVVPVTPGRILFEVEGVVFDVAKEALRLAAQKLPVTTKFIVRHDYDFNILK</sequence>
<name>RL16_AZOPC</name>
<keyword id="KW-1185">Reference proteome</keyword>
<keyword id="KW-0687">Ribonucleoprotein</keyword>
<keyword id="KW-0689">Ribosomal protein</keyword>
<keyword id="KW-0694">RNA-binding</keyword>
<keyword id="KW-0699">rRNA-binding</keyword>
<keyword id="KW-0820">tRNA-binding</keyword>
<protein>
    <recommendedName>
        <fullName evidence="1">Large ribosomal subunit protein uL16</fullName>
    </recommendedName>
    <alternativeName>
        <fullName evidence="3">50S ribosomal protein L16</fullName>
    </alternativeName>
</protein>
<comment type="function">
    <text evidence="1">Binds 23S rRNA and is also seen to make contacts with the A and possibly P site tRNAs.</text>
</comment>
<comment type="subunit">
    <text evidence="1">Part of the 50S ribosomal subunit.</text>
</comment>
<comment type="similarity">
    <text evidence="1">Belongs to the universal ribosomal protein uL16 family.</text>
</comment>
<evidence type="ECO:0000255" key="1">
    <source>
        <dbReference type="HAMAP-Rule" id="MF_01342"/>
    </source>
</evidence>
<evidence type="ECO:0000256" key="2">
    <source>
        <dbReference type="SAM" id="MobiDB-lite"/>
    </source>
</evidence>
<evidence type="ECO:0000305" key="3"/>
<gene>
    <name evidence="1" type="primary">rplP</name>
    <name type="ordered locus">CFPG_087</name>
</gene>
<accession>B6YQ78</accession>